<reference key="1">
    <citation type="journal article" date="2003" name="Nucleic Acids Res.">
        <title>What's in the genome of a filamentous fungus? Analysis of the Neurospora genome sequence.</title>
        <authorList>
            <person name="Mannhaupt G."/>
            <person name="Montrone C."/>
            <person name="Haase D."/>
            <person name="Mewes H.-W."/>
            <person name="Aign V."/>
            <person name="Hoheisel J.D."/>
            <person name="Fartmann B."/>
            <person name="Nyakatura G."/>
            <person name="Kempken F."/>
            <person name="Maier J."/>
            <person name="Schulte U."/>
        </authorList>
    </citation>
    <scope>NUCLEOTIDE SEQUENCE [LARGE SCALE GENOMIC DNA]</scope>
    <source>
        <strain>ATCC 24698 / 74-OR23-1A / CBS 708.71 / DSM 1257 / FGSC 987</strain>
    </source>
</reference>
<reference key="2">
    <citation type="journal article" date="2003" name="Nature">
        <title>The genome sequence of the filamentous fungus Neurospora crassa.</title>
        <authorList>
            <person name="Galagan J.E."/>
            <person name="Calvo S.E."/>
            <person name="Borkovich K.A."/>
            <person name="Selker E.U."/>
            <person name="Read N.D."/>
            <person name="Jaffe D.B."/>
            <person name="FitzHugh W."/>
            <person name="Ma L.-J."/>
            <person name="Smirnov S."/>
            <person name="Purcell S."/>
            <person name="Rehman B."/>
            <person name="Elkins T."/>
            <person name="Engels R."/>
            <person name="Wang S."/>
            <person name="Nielsen C.B."/>
            <person name="Butler J."/>
            <person name="Endrizzi M."/>
            <person name="Qui D."/>
            <person name="Ianakiev P."/>
            <person name="Bell-Pedersen D."/>
            <person name="Nelson M.A."/>
            <person name="Werner-Washburne M."/>
            <person name="Selitrennikoff C.P."/>
            <person name="Kinsey J.A."/>
            <person name="Braun E.L."/>
            <person name="Zelter A."/>
            <person name="Schulte U."/>
            <person name="Kothe G.O."/>
            <person name="Jedd G."/>
            <person name="Mewes H.-W."/>
            <person name="Staben C."/>
            <person name="Marcotte E."/>
            <person name="Greenberg D."/>
            <person name="Roy A."/>
            <person name="Foley K."/>
            <person name="Naylor J."/>
            <person name="Stange-Thomann N."/>
            <person name="Barrett R."/>
            <person name="Gnerre S."/>
            <person name="Kamal M."/>
            <person name="Kamvysselis M."/>
            <person name="Mauceli E.W."/>
            <person name="Bielke C."/>
            <person name="Rudd S."/>
            <person name="Frishman D."/>
            <person name="Krystofova S."/>
            <person name="Rasmussen C."/>
            <person name="Metzenberg R.L."/>
            <person name="Perkins D.D."/>
            <person name="Kroken S."/>
            <person name="Cogoni C."/>
            <person name="Macino G."/>
            <person name="Catcheside D.E.A."/>
            <person name="Li W."/>
            <person name="Pratt R.J."/>
            <person name="Osmani S.A."/>
            <person name="DeSouza C.P.C."/>
            <person name="Glass N.L."/>
            <person name="Orbach M.J."/>
            <person name="Berglund J.A."/>
            <person name="Voelker R."/>
            <person name="Yarden O."/>
            <person name="Plamann M."/>
            <person name="Seiler S."/>
            <person name="Dunlap J.C."/>
            <person name="Radford A."/>
            <person name="Aramayo R."/>
            <person name="Natvig D.O."/>
            <person name="Alex L.A."/>
            <person name="Mannhaupt G."/>
            <person name="Ebbole D.J."/>
            <person name="Freitag M."/>
            <person name="Paulsen I."/>
            <person name="Sachs M.S."/>
            <person name="Lander E.S."/>
            <person name="Nusbaum C."/>
            <person name="Birren B.W."/>
        </authorList>
    </citation>
    <scope>NUCLEOTIDE SEQUENCE [LARGE SCALE GENOMIC DNA]</scope>
    <source>
        <strain>ATCC 24698 / 74-OR23-1A / CBS 708.71 / DSM 1257 / FGSC 987</strain>
    </source>
</reference>
<keyword id="KW-0175">Coiled coil</keyword>
<keyword id="KW-0509">mRNA transport</keyword>
<keyword id="KW-0539">Nucleus</keyword>
<keyword id="KW-1185">Reference proteome</keyword>
<keyword id="KW-0808">Transferase</keyword>
<keyword id="KW-0813">Transport</keyword>
<keyword id="KW-0833">Ubl conjugation pathway</keyword>
<dbReference type="EC" id="2.3.2.26"/>
<dbReference type="EMBL" id="AL356834">
    <property type="protein sequence ID" value="CAB92704.2"/>
    <property type="status" value="ALT_SEQ"/>
    <property type="molecule type" value="Genomic_DNA"/>
</dbReference>
<dbReference type="EMBL" id="CM002237">
    <property type="protein sequence ID" value="EAA34194.3"/>
    <property type="molecule type" value="Genomic_DNA"/>
</dbReference>
<dbReference type="PIR" id="T49799">
    <property type="entry name" value="T49799"/>
</dbReference>
<dbReference type="RefSeq" id="XP_963430.3">
    <property type="nucleotide sequence ID" value="XM_958337.3"/>
</dbReference>
<dbReference type="SMR" id="Q9P4Z1"/>
<dbReference type="FunCoup" id="Q9P4Z1">
    <property type="interactions" value="1024"/>
</dbReference>
<dbReference type="STRING" id="367110.Q9P4Z1"/>
<dbReference type="PaxDb" id="5141-EFNCRP00000008460"/>
<dbReference type="EnsemblFungi" id="EAA34194">
    <property type="protein sequence ID" value="EAA34194"/>
    <property type="gene ID" value="NCU08501"/>
</dbReference>
<dbReference type="GeneID" id="3879570"/>
<dbReference type="KEGG" id="ncr:NCU08501"/>
<dbReference type="VEuPathDB" id="FungiDB:NCU08501"/>
<dbReference type="HOGENOM" id="CLU_000215_0_1_1"/>
<dbReference type="InParanoid" id="Q9P4Z1"/>
<dbReference type="OrthoDB" id="8068875at2759"/>
<dbReference type="UniPathway" id="UPA00143"/>
<dbReference type="Proteomes" id="UP000001805">
    <property type="component" value="Chromosome 6, Linkage Group II"/>
</dbReference>
<dbReference type="GO" id="GO:0005737">
    <property type="term" value="C:cytoplasm"/>
    <property type="evidence" value="ECO:0000318"/>
    <property type="project" value="GO_Central"/>
</dbReference>
<dbReference type="GO" id="GO:0005634">
    <property type="term" value="C:nucleus"/>
    <property type="evidence" value="ECO:0000318"/>
    <property type="project" value="GO_Central"/>
</dbReference>
<dbReference type="GO" id="GO:0061630">
    <property type="term" value="F:ubiquitin protein ligase activity"/>
    <property type="evidence" value="ECO:0000318"/>
    <property type="project" value="GO_Central"/>
</dbReference>
<dbReference type="GO" id="GO:0046907">
    <property type="term" value="P:intracellular transport"/>
    <property type="evidence" value="ECO:0007669"/>
    <property type="project" value="UniProtKB-ARBA"/>
</dbReference>
<dbReference type="GO" id="GO:0051028">
    <property type="term" value="P:mRNA transport"/>
    <property type="evidence" value="ECO:0007669"/>
    <property type="project" value="UniProtKB-KW"/>
</dbReference>
<dbReference type="GO" id="GO:0016567">
    <property type="term" value="P:protein ubiquitination"/>
    <property type="evidence" value="ECO:0007669"/>
    <property type="project" value="UniProtKB-UniPathway"/>
</dbReference>
<dbReference type="GO" id="GO:0006511">
    <property type="term" value="P:ubiquitin-dependent protein catabolic process"/>
    <property type="evidence" value="ECO:0000318"/>
    <property type="project" value="GO_Central"/>
</dbReference>
<dbReference type="CDD" id="cd00078">
    <property type="entry name" value="HECTc"/>
    <property type="match status" value="1"/>
</dbReference>
<dbReference type="FunFam" id="3.30.2410.10:FF:000004">
    <property type="entry name" value="E3 ubiquitin-protein ligase HUWE1, variant"/>
    <property type="match status" value="1"/>
</dbReference>
<dbReference type="FunFam" id="3.30.2160.10:FF:000001">
    <property type="entry name" value="E3 ubiquitin-protein ligase NEDD4-like"/>
    <property type="match status" value="1"/>
</dbReference>
<dbReference type="FunFam" id="3.90.1750.10:FF:000003">
    <property type="entry name" value="E3 ubiquitin-protein ligase UPL1"/>
    <property type="match status" value="1"/>
</dbReference>
<dbReference type="Gene3D" id="3.30.2160.10">
    <property type="entry name" value="Hect, E3 ligase catalytic domain"/>
    <property type="match status" value="1"/>
</dbReference>
<dbReference type="Gene3D" id="3.30.2410.10">
    <property type="entry name" value="Hect, E3 ligase catalytic domain"/>
    <property type="match status" value="1"/>
</dbReference>
<dbReference type="Gene3D" id="3.90.1750.10">
    <property type="entry name" value="Hect, E3 ligase catalytic domains"/>
    <property type="match status" value="1"/>
</dbReference>
<dbReference type="InterPro" id="IPR010309">
    <property type="entry name" value="E3_Ub_ligase_DUF908"/>
</dbReference>
<dbReference type="InterPro" id="IPR010314">
    <property type="entry name" value="E3_Ub_ligase_DUF913"/>
</dbReference>
<dbReference type="InterPro" id="IPR050409">
    <property type="entry name" value="E3_ubiq-protein_ligase"/>
</dbReference>
<dbReference type="InterPro" id="IPR000569">
    <property type="entry name" value="HECT_dom"/>
</dbReference>
<dbReference type="InterPro" id="IPR035983">
    <property type="entry name" value="Hect_E3_ubiquitin_ligase"/>
</dbReference>
<dbReference type="InterPro" id="IPR025527">
    <property type="entry name" value="HUWE1/Rev1_UBM"/>
</dbReference>
<dbReference type="PANTHER" id="PTHR11254:SF67">
    <property type="entry name" value="E3 UBIQUITIN-PROTEIN LIGASE HUWE1"/>
    <property type="match status" value="1"/>
</dbReference>
<dbReference type="PANTHER" id="PTHR11254">
    <property type="entry name" value="HECT DOMAIN UBIQUITIN-PROTEIN LIGASE"/>
    <property type="match status" value="1"/>
</dbReference>
<dbReference type="Pfam" id="PF06012">
    <property type="entry name" value="DUF908"/>
    <property type="match status" value="1"/>
</dbReference>
<dbReference type="Pfam" id="PF06025">
    <property type="entry name" value="DUF913"/>
    <property type="match status" value="1"/>
</dbReference>
<dbReference type="Pfam" id="PF00632">
    <property type="entry name" value="HECT"/>
    <property type="match status" value="1"/>
</dbReference>
<dbReference type="Pfam" id="PF14377">
    <property type="entry name" value="UBM"/>
    <property type="match status" value="3"/>
</dbReference>
<dbReference type="SMART" id="SM00119">
    <property type="entry name" value="HECTc"/>
    <property type="match status" value="1"/>
</dbReference>
<dbReference type="SUPFAM" id="SSF56204">
    <property type="entry name" value="Hect, E3 ligase catalytic domain"/>
    <property type="match status" value="1"/>
</dbReference>
<dbReference type="PROSITE" id="PS50237">
    <property type="entry name" value="HECT"/>
    <property type="match status" value="1"/>
</dbReference>
<protein>
    <recommendedName>
        <fullName>E3 ubiquitin-protein ligase TOM1-like</fullName>
        <ecNumber>2.3.2.26</ecNumber>
    </recommendedName>
    <alternativeName>
        <fullName>HECT-type E3 ubiquitin transferase TOM1-like</fullName>
    </alternativeName>
</protein>
<evidence type="ECO:0000250" key="1"/>
<evidence type="ECO:0000250" key="2">
    <source>
        <dbReference type="UniProtKB" id="Q03280"/>
    </source>
</evidence>
<evidence type="ECO:0000255" key="3"/>
<evidence type="ECO:0000255" key="4">
    <source>
        <dbReference type="PROSITE-ProRule" id="PRU00104"/>
    </source>
</evidence>
<evidence type="ECO:0000256" key="5">
    <source>
        <dbReference type="SAM" id="MobiDB-lite"/>
    </source>
</evidence>
<evidence type="ECO:0000305" key="6"/>
<organism>
    <name type="scientific">Neurospora crassa (strain ATCC 24698 / 74-OR23-1A / CBS 708.71 / DSM 1257 / FGSC 987)</name>
    <dbReference type="NCBI Taxonomy" id="367110"/>
    <lineage>
        <taxon>Eukaryota</taxon>
        <taxon>Fungi</taxon>
        <taxon>Dikarya</taxon>
        <taxon>Ascomycota</taxon>
        <taxon>Pezizomycotina</taxon>
        <taxon>Sordariomycetes</taxon>
        <taxon>Sordariomycetidae</taxon>
        <taxon>Sordariales</taxon>
        <taxon>Sordariaceae</taxon>
        <taxon>Neurospora</taxon>
    </lineage>
</organism>
<gene>
    <name type="ORF">B11B22.010</name>
    <name type="ORF">NCU08501</name>
</gene>
<accession>Q9P4Z1</accession>
<comment type="function">
    <text evidence="2">Probable ubiquitin ligase protein, which may be involved in mRNA export. E3 ubiquitin ligase proteins mediate ubiquitination and subsequent proteasomal degradation of target proteins. Participates in mRNA export from the nucleus by regulating the transport of hnRNP proteins.</text>
</comment>
<comment type="catalytic activity">
    <reaction>
        <text>S-ubiquitinyl-[E2 ubiquitin-conjugating enzyme]-L-cysteine + [acceptor protein]-L-lysine = [E2 ubiquitin-conjugating enzyme]-L-cysteine + N(6)-ubiquitinyl-[acceptor protein]-L-lysine.</text>
        <dbReference type="EC" id="2.3.2.26"/>
    </reaction>
</comment>
<comment type="pathway">
    <text>Protein modification; protein ubiquitination.</text>
</comment>
<comment type="subcellular location">
    <subcellularLocation>
        <location evidence="1">Nucleus</location>
    </subcellularLocation>
</comment>
<comment type="similarity">
    <text evidence="6">Belongs to the UPL family. TOM1/PTR1 subfamily.</text>
</comment>
<comment type="sequence caution" evidence="6">
    <conflict type="erroneous gene model prediction">
        <sequence resource="EMBL-CDS" id="CAB92704"/>
    </conflict>
</comment>
<feature type="chain" id="PRO_0000120346" description="E3 ubiquitin-protein ligase TOM1-like">
    <location>
        <begin position="1"/>
        <end position="4076"/>
    </location>
</feature>
<feature type="domain" description="HECT" evidence="4">
    <location>
        <begin position="3740"/>
        <end position="4076"/>
    </location>
</feature>
<feature type="region of interest" description="Disordered" evidence="5">
    <location>
        <begin position="225"/>
        <end position="256"/>
    </location>
</feature>
<feature type="region of interest" description="Disordered" evidence="5">
    <location>
        <begin position="288"/>
        <end position="360"/>
    </location>
</feature>
<feature type="region of interest" description="Disordered" evidence="5">
    <location>
        <begin position="748"/>
        <end position="819"/>
    </location>
</feature>
<feature type="region of interest" description="Disordered" evidence="5">
    <location>
        <begin position="921"/>
        <end position="970"/>
    </location>
</feature>
<feature type="region of interest" description="Disordered" evidence="5">
    <location>
        <begin position="1083"/>
        <end position="1103"/>
    </location>
</feature>
<feature type="region of interest" description="Disordered" evidence="5">
    <location>
        <begin position="1571"/>
        <end position="1646"/>
    </location>
</feature>
<feature type="region of interest" description="Disordered" evidence="5">
    <location>
        <begin position="1988"/>
        <end position="2041"/>
    </location>
</feature>
<feature type="region of interest" description="Disordered" evidence="5">
    <location>
        <begin position="2067"/>
        <end position="2110"/>
    </location>
</feature>
<feature type="region of interest" description="Disordered" evidence="5">
    <location>
        <begin position="2275"/>
        <end position="2295"/>
    </location>
</feature>
<feature type="region of interest" description="Disordered" evidence="5">
    <location>
        <begin position="2356"/>
        <end position="2551"/>
    </location>
</feature>
<feature type="region of interest" description="Disordered" evidence="5">
    <location>
        <begin position="2581"/>
        <end position="2634"/>
    </location>
</feature>
<feature type="region of interest" description="Disordered" evidence="5">
    <location>
        <begin position="2782"/>
        <end position="2817"/>
    </location>
</feature>
<feature type="region of interest" description="Disordered" evidence="5">
    <location>
        <begin position="2858"/>
        <end position="2955"/>
    </location>
</feature>
<feature type="region of interest" description="Disordered" evidence="5">
    <location>
        <begin position="3037"/>
        <end position="3066"/>
    </location>
</feature>
<feature type="region of interest" description="Disordered" evidence="5">
    <location>
        <begin position="3105"/>
        <end position="3132"/>
    </location>
</feature>
<feature type="region of interest" description="Disordered" evidence="5">
    <location>
        <begin position="3216"/>
        <end position="3241"/>
    </location>
</feature>
<feature type="region of interest" description="Disordered" evidence="5">
    <location>
        <begin position="3353"/>
        <end position="3444"/>
    </location>
</feature>
<feature type="coiled-coil region" evidence="3">
    <location>
        <begin position="2851"/>
        <end position="2929"/>
    </location>
</feature>
<feature type="coiled-coil region" evidence="3">
    <location>
        <begin position="3341"/>
        <end position="3375"/>
    </location>
</feature>
<feature type="compositionally biased region" description="Low complexity" evidence="5">
    <location>
        <begin position="225"/>
        <end position="237"/>
    </location>
</feature>
<feature type="compositionally biased region" description="Basic and acidic residues" evidence="5">
    <location>
        <begin position="238"/>
        <end position="250"/>
    </location>
</feature>
<feature type="compositionally biased region" description="Low complexity" evidence="5">
    <location>
        <begin position="311"/>
        <end position="320"/>
    </location>
</feature>
<feature type="compositionally biased region" description="Polar residues" evidence="5">
    <location>
        <begin position="322"/>
        <end position="343"/>
    </location>
</feature>
<feature type="compositionally biased region" description="Acidic residues" evidence="5">
    <location>
        <begin position="767"/>
        <end position="778"/>
    </location>
</feature>
<feature type="compositionally biased region" description="Basic and acidic residues" evidence="5">
    <location>
        <begin position="940"/>
        <end position="950"/>
    </location>
</feature>
<feature type="compositionally biased region" description="Polar residues" evidence="5">
    <location>
        <begin position="959"/>
        <end position="969"/>
    </location>
</feature>
<feature type="compositionally biased region" description="Polar residues" evidence="5">
    <location>
        <begin position="1606"/>
        <end position="1620"/>
    </location>
</feature>
<feature type="compositionally biased region" description="Low complexity" evidence="5">
    <location>
        <begin position="1621"/>
        <end position="1632"/>
    </location>
</feature>
<feature type="compositionally biased region" description="Polar residues" evidence="5">
    <location>
        <begin position="1633"/>
        <end position="1642"/>
    </location>
</feature>
<feature type="compositionally biased region" description="Basic and acidic residues" evidence="5">
    <location>
        <begin position="2021"/>
        <end position="2041"/>
    </location>
</feature>
<feature type="compositionally biased region" description="Polar residues" evidence="5">
    <location>
        <begin position="2086"/>
        <end position="2096"/>
    </location>
</feature>
<feature type="compositionally biased region" description="Basic and acidic residues" evidence="5">
    <location>
        <begin position="2099"/>
        <end position="2110"/>
    </location>
</feature>
<feature type="compositionally biased region" description="Acidic residues" evidence="5">
    <location>
        <begin position="2378"/>
        <end position="2387"/>
    </location>
</feature>
<feature type="compositionally biased region" description="Acidic residues" evidence="5">
    <location>
        <begin position="2405"/>
        <end position="2450"/>
    </location>
</feature>
<feature type="compositionally biased region" description="Low complexity" evidence="5">
    <location>
        <begin position="2460"/>
        <end position="2469"/>
    </location>
</feature>
<feature type="compositionally biased region" description="Acidic residues" evidence="5">
    <location>
        <begin position="2470"/>
        <end position="2516"/>
    </location>
</feature>
<feature type="compositionally biased region" description="Acidic residues" evidence="5">
    <location>
        <begin position="2523"/>
        <end position="2551"/>
    </location>
</feature>
<feature type="compositionally biased region" description="Basic and acidic residues" evidence="5">
    <location>
        <begin position="2587"/>
        <end position="2597"/>
    </location>
</feature>
<feature type="compositionally biased region" description="Acidic residues" evidence="5">
    <location>
        <begin position="2598"/>
        <end position="2622"/>
    </location>
</feature>
<feature type="compositionally biased region" description="Basic and acidic residues" evidence="5">
    <location>
        <begin position="2788"/>
        <end position="2803"/>
    </location>
</feature>
<feature type="compositionally biased region" description="Basic and acidic residues" evidence="5">
    <location>
        <begin position="2858"/>
        <end position="2912"/>
    </location>
</feature>
<feature type="compositionally biased region" description="Low complexity" evidence="5">
    <location>
        <begin position="2913"/>
        <end position="2927"/>
    </location>
</feature>
<feature type="compositionally biased region" description="Basic and acidic residues" evidence="5">
    <location>
        <begin position="3037"/>
        <end position="3047"/>
    </location>
</feature>
<feature type="compositionally biased region" description="Polar residues" evidence="5">
    <location>
        <begin position="3108"/>
        <end position="3117"/>
    </location>
</feature>
<feature type="compositionally biased region" description="Basic and acidic residues" evidence="5">
    <location>
        <begin position="3353"/>
        <end position="3372"/>
    </location>
</feature>
<feature type="compositionally biased region" description="Low complexity" evidence="5">
    <location>
        <begin position="3373"/>
        <end position="3414"/>
    </location>
</feature>
<feature type="compositionally biased region" description="Basic and acidic residues" evidence="5">
    <location>
        <begin position="3415"/>
        <end position="3439"/>
    </location>
</feature>
<feature type="active site" description="Glycyl thioester intermediate" evidence="4">
    <location>
        <position position="4043"/>
    </location>
</feature>
<name>TOM1_NEUCR</name>
<sequence>MGKITKTMQQKHRDTLSPWLKEFVDTASSAPLPLILQRLDEFPRRWMFPRGDLYHWIPLLNRFDNILESICATYELSKGPQTRDFGRDVLLNNGGPSLEYRDEPWTVERLAEAGYKEDGDCQLLVAILKFTRMLLEHCGNRSIYASSHHIDRLLNSPYLEVQAAALEVGLELAQRYNASVKRMPSPPRSVNPTLLANHYNIDLEKVQLLARPFVRTPIVKSLEASSAAPAVSAGSTAKAKDKEKEKEKATGPKNVASMYANDLKALASSRPDEEDLWKSWGDLKMSYYPDTTNGEPSARDSKDAQPVEPRTTSSPAAPTPLRRSSTMNVSQSSRTQRVGSSEEGSPLKPSGAATDDRDGPKVVEIPRSVIESKRIYDLYDMCPSDMPATMKFEFTSRLRTCKALLGTHRERQLALAVRLLAITNLAYILPEAVFVDKVLKYDKDEPRTFQLVYQLAELIAPSPDGNPSEVPKWLQSITLALLEAISHQQEKHSDVLAALNVNVNHGILLYVIRIAVAEMKEDAPVDDQDELDADNWRGNLFGLTLQIAMATRIGQEMMTAGLMDCLVEILNLRTAVASRHYSMVLAFLDSLTYAYQTAFSQLNSAGGLDAITNLIVHTVGESKTLTEAGLGTKPELHASLVDYSIPFYHQQTLKWLLKFIHHVMANTYSFDGTNTERLLRNLVDNSSLLGSLCTIARQNRFFGTVVWSNATTLLSDFINNDPTSFAAISESGWIQAFLESVTNRPVSIPAEQPSLEPSQSRANDGSEGNDADDDSEDDGSAHDAAPDSDGQAATQPHPPTQEMLEAPRDFPPAHGILPSSESMNIIPTVLNSISLNNRGMKMVLSSGAIQSYMEIFESATHVQCMAHDPELASTIGSSLDELSRHHPALRPAIANAIIDMIARVTHLVKTMDATKACGARLEAPESSASPVAEPAQATEVKGKGKEKATDDTDVEMAEASSSSSGNNKPAQAPSIPYIQVLSTFLQPIISNSHLKGALISAGVIEILLDLAESPSLPHDFGETPACRMLVAAISQLIESAQIVGLPSLLFRMENTVKVLQPRINPTTTEPFFAPFLTLNSSVSPVQDEEPASEKRTPDVSSGTETVKALLNIQTMIKILYHCFPFSNRSQMVSMPAVNVYDYYIRLIQSLGPLLRGVLKEEAAVNGAVPHHWTLKNKPYQTNSLGSRTDVQDLLTDSAAQDSSANGKKLTPEEQSTAEYKNFQTLRVLLHSFMPSIFPFFQTIGKALLPRRNNNDPYIRSRHLAIAEASAETLIQQLQQSKAELTVRDIHNWIIMIHTFGEMVVDTNHRTASGGAFLILPVITAFKELGGFEALNVMLKRLADMVSTGATEGQEATKAKLSMIGMKKVLDIYCFIISGKNLSDSMAQIALAPKPTERTTREFSHQLVVELRMSILPVVREIWASNIIEKSTGTVVSKIIDIIKTIAAGDLESNAQSRSDKESLPHLFKNRESVPFKWISRKDAETLATEQGVDVDLALEALYRANGKESDTKEYIKYQKAHLVRNRNPVPAEDAFKEVPSPNLSSSAGMSLSNLLNTPTFPVSDLLGAEPMALDPVPNQPLGEASGETALGHATESSEDGSDEGQPGTSRETNVGASTTAPQQLPVLPSQQPATESQSNTPRITREDLVEERAKLYDTLIDRSLEVISSHPEAVFEVADLIQNTILKTDNEDRRVEVGEILANALMSFASDDADELKENGSSIAAYAHLLALLLQQTAFMRTTVDMLRDYVGDYLGFLKLPPASSNDSLPPWIPYILLIFEIMLFKDAQPPDIKWKQPVKEDDPIEESVIEVKEPNFLAEHRSSLLTTLLDFLPRIGKEESLAVSVLRILVVLTRDHAVAKIVGEKKNLQRLFVMAKQLCGAGSTRLKQTHISEHIRQILRHIIEDEETLRQIFETDIRHLMTSRQRPSAAPGLEPQAYLRTQAHLALRSPKTFVEVSTELLKLNRAVSHLGDGTLRSTPFLVLKERPADASVSPKESSVEPAVQATEDLTISDVKPSTEVTDKDMHDAPKNPAQDLKRPILEHPDGVVHFLLTELLNYKDVDERENVPAPPAAASKPESDATAANEATPSPSGDEQNSESKEKEKKLAKSPFKAEDHPIFIYRCFLLDCLAELLQSYNRAKVEFINFKRSAPVQANAPVKPRSSVLNYILNDLLCFSPASGVPESIAMKKKAATAVPARAVLVALVSKTGEKPQNRTHEPFEYDDEPDLLFIRRFVLDTILRAYKDASVSGEPADIRYGKMNALAELMAQMIGEGDKDSRPNNPRGTDPSIGRSQAQLKRLMYEKGYLTSLTASIADIDLTFPHNRAPLKPILAVIKTLSKTAVSMSQLGLIPASGTAGTDQAEDEFLSDGSSVSEDLTDDREETPDLYRNSTLGMLEPGRDDEFSDEDEDDDEDMYDDEQYDDELDYGDDMSQDNEDNPSDEEDDLGEMGEMGGMPGQPGVVEVLMGENDDEEDNDDMDDMDEDDEMDEDDEQELSDEDEDEEVGSEDMDDLEDDIHIVDEEGNAIDDDGASWDDGTDEDEEDEEELDYEAEAQNMQEAQLHNRRTFPEIMRAAMENAGDDLDAEPIRDFDGHYIDDDEDGEEDDDEDEGEDDMDDDMYFDGDGLHDDLLAPNMPSGLGWDIAIEPNHRHRPSRSPWPNSPFVVGRHRDAIDFQNFFRRPAHLSRHLPPPADVMSGTNPLLLPQSRREVPRHAHSQLVRLGITPNMIGGLGMGMGVEPLAFISDLVQHLPDVRLSAGGGPLALHFTADGPGGIIRELNAIPIPPPHSRESRPTEARRDTYQEPHQAVQFSPESTHERWQQEVKMIFGFGYQDKAQKLAPLILSKLTPAAIQAEKEEKARKAEADRKAEEERKKRQEEERKKREAKEAEEKAAREKKEAEERERLERERAEAAAQAAAQAAADQEANAVSQEAHPMEGVETQGPGENAEQQAEDERPRVYYTLRNQQIDITELGIDAEYLEALPEEFRDEVIAQAISTRRSQAREQVSQEGENTEVFQEFLEALPEELRNEILHQEQHEQRRRERQNAAGGQDLGPADMDPASILLTFPPGLRQQVLLDQGEDIMEHLGPELAAEARTLVARHRQLHAQQGGQAASRSRDAQRPTEAGAGTVQKIQKRTVVQMLDKQGIATLLRLMFVSQQGSIRSSLFSIFANLCENRQNRLDVISSLLQILQDGCANMDAVERSFAQISHKAKQLKEKDAKTPHPLKRSLTGGTNNNGQFPASSEVSPLLIVQQCLDLLVELSKLNPHIPSVFLTEHETVASTLKRSLSRKGKGKDVNGKAQKFAINSLLTLLDRSLVMESSAVMQVLADLLNKVTIPLQAIERRRKEAEEQAKKKKEAEEKAATEREAANAPEEQASTSTEQTPAQQEATQQPSESTPAAASGQQPAQQDQENKELEAPKEKADEKDVQSDEKKIRQLTPPTIPEHNLKLVINIFVARECSSKTFQNTISTIKNLSNIPGAKKVFGDELVRQARVLSENILSDLDNLLPHILKAESGTQIQGVALAKFSPGASEQNKLLRVLTALDHLFDSKSKKQDKPAEGENTKEDLLGSLYWNPTFGKMWDKLSACLSAIRQRDNMLNVATILLPLIESLMVVCKNTTLSDASAVSNANSQKEMLLTSPPPEDRIAGLFFTFTEEHRRILNELVRHNPKLMSGTFSLLVKNPKVLEFDNKRNYFNRSVHSKYQQTRHSFPPLQLQVRREHVFHDSFRSLYYKKADELKFGKLNIRFQGEEGVDAGGVTREWFQVLSRQMFDPNYVLFVPVSSDRTTFHPNKLSPINDEHLPFFKFIGRIIGKALYEGRLLECYFSRAVYKRILGKPVSVKDMESFDPDYYKSLVWMLENDITDIITETFSVEDDVFGEVKVVDLIENGRNIPVTEENKHEYVRLIVEHKLITSVKDQMKAFLTGFHEIIPEELIAIFNEQELELLISGLPDIDIDDWKANTEYHNYSAGAPQIQWFWRAVRSFDKEELAKLLQFVTGTSKVPLNGFKELEGMNGVSRFNIHRDYGSKDRLPSSHTCFNQLDLPEYENYETLRSQLLKAITAGSDYFGFA</sequence>
<proteinExistence type="inferred from homology"/>